<protein>
    <recommendedName>
        <fullName>Uncharacterized protein C1orf50 homolog</fullName>
    </recommendedName>
</protein>
<sequence>MADPGVPGRYESGTGNLGVKEAAGPGGALVELTPTPGGLALVSPYHTHRVGDPLDLVALAEQVQKADEFIRANATNKLTVIAEQIQHLQEQARKVLEDARRDADLHHAACNMVKKPGNIYYLYQRESGQQYFSIISPEEWGTGCPHDFLGAYKLQHDMSWTPYEDVEKQDAKIGMMDKLLSQPMALPPCTEPTFQGLPH</sequence>
<evidence type="ECO:0000255" key="1"/>
<accession>Q5EBG8</accession>
<reference key="1">
    <citation type="journal article" date="2005" name="Science">
        <title>The transcriptional landscape of the mammalian genome.</title>
        <authorList>
            <person name="Carninci P."/>
            <person name="Kasukawa T."/>
            <person name="Katayama S."/>
            <person name="Gough J."/>
            <person name="Frith M.C."/>
            <person name="Maeda N."/>
            <person name="Oyama R."/>
            <person name="Ravasi T."/>
            <person name="Lenhard B."/>
            <person name="Wells C."/>
            <person name="Kodzius R."/>
            <person name="Shimokawa K."/>
            <person name="Bajic V.B."/>
            <person name="Brenner S.E."/>
            <person name="Batalov S."/>
            <person name="Forrest A.R."/>
            <person name="Zavolan M."/>
            <person name="Davis M.J."/>
            <person name="Wilming L.G."/>
            <person name="Aidinis V."/>
            <person name="Allen J.E."/>
            <person name="Ambesi-Impiombato A."/>
            <person name="Apweiler R."/>
            <person name="Aturaliya R.N."/>
            <person name="Bailey T.L."/>
            <person name="Bansal M."/>
            <person name="Baxter L."/>
            <person name="Beisel K.W."/>
            <person name="Bersano T."/>
            <person name="Bono H."/>
            <person name="Chalk A.M."/>
            <person name="Chiu K.P."/>
            <person name="Choudhary V."/>
            <person name="Christoffels A."/>
            <person name="Clutterbuck D.R."/>
            <person name="Crowe M.L."/>
            <person name="Dalla E."/>
            <person name="Dalrymple B.P."/>
            <person name="de Bono B."/>
            <person name="Della Gatta G."/>
            <person name="di Bernardo D."/>
            <person name="Down T."/>
            <person name="Engstrom P."/>
            <person name="Fagiolini M."/>
            <person name="Faulkner G."/>
            <person name="Fletcher C.F."/>
            <person name="Fukushima T."/>
            <person name="Furuno M."/>
            <person name="Futaki S."/>
            <person name="Gariboldi M."/>
            <person name="Georgii-Hemming P."/>
            <person name="Gingeras T.R."/>
            <person name="Gojobori T."/>
            <person name="Green R.E."/>
            <person name="Gustincich S."/>
            <person name="Harbers M."/>
            <person name="Hayashi Y."/>
            <person name="Hensch T.K."/>
            <person name="Hirokawa N."/>
            <person name="Hill D."/>
            <person name="Huminiecki L."/>
            <person name="Iacono M."/>
            <person name="Ikeo K."/>
            <person name="Iwama A."/>
            <person name="Ishikawa T."/>
            <person name="Jakt M."/>
            <person name="Kanapin A."/>
            <person name="Katoh M."/>
            <person name="Kawasawa Y."/>
            <person name="Kelso J."/>
            <person name="Kitamura H."/>
            <person name="Kitano H."/>
            <person name="Kollias G."/>
            <person name="Krishnan S.P."/>
            <person name="Kruger A."/>
            <person name="Kummerfeld S.K."/>
            <person name="Kurochkin I.V."/>
            <person name="Lareau L.F."/>
            <person name="Lazarevic D."/>
            <person name="Lipovich L."/>
            <person name="Liu J."/>
            <person name="Liuni S."/>
            <person name="McWilliam S."/>
            <person name="Madan Babu M."/>
            <person name="Madera M."/>
            <person name="Marchionni L."/>
            <person name="Matsuda H."/>
            <person name="Matsuzawa S."/>
            <person name="Miki H."/>
            <person name="Mignone F."/>
            <person name="Miyake S."/>
            <person name="Morris K."/>
            <person name="Mottagui-Tabar S."/>
            <person name="Mulder N."/>
            <person name="Nakano N."/>
            <person name="Nakauchi H."/>
            <person name="Ng P."/>
            <person name="Nilsson R."/>
            <person name="Nishiguchi S."/>
            <person name="Nishikawa S."/>
            <person name="Nori F."/>
            <person name="Ohara O."/>
            <person name="Okazaki Y."/>
            <person name="Orlando V."/>
            <person name="Pang K.C."/>
            <person name="Pavan W.J."/>
            <person name="Pavesi G."/>
            <person name="Pesole G."/>
            <person name="Petrovsky N."/>
            <person name="Piazza S."/>
            <person name="Reed J."/>
            <person name="Reid J.F."/>
            <person name="Ring B.Z."/>
            <person name="Ringwald M."/>
            <person name="Rost B."/>
            <person name="Ruan Y."/>
            <person name="Salzberg S.L."/>
            <person name="Sandelin A."/>
            <person name="Schneider C."/>
            <person name="Schoenbach C."/>
            <person name="Sekiguchi K."/>
            <person name="Semple C.A."/>
            <person name="Seno S."/>
            <person name="Sessa L."/>
            <person name="Sheng Y."/>
            <person name="Shibata Y."/>
            <person name="Shimada H."/>
            <person name="Shimada K."/>
            <person name="Silva D."/>
            <person name="Sinclair B."/>
            <person name="Sperling S."/>
            <person name="Stupka E."/>
            <person name="Sugiura K."/>
            <person name="Sultana R."/>
            <person name="Takenaka Y."/>
            <person name="Taki K."/>
            <person name="Tammoja K."/>
            <person name="Tan S.L."/>
            <person name="Tang S."/>
            <person name="Taylor M.S."/>
            <person name="Tegner J."/>
            <person name="Teichmann S.A."/>
            <person name="Ueda H.R."/>
            <person name="van Nimwegen E."/>
            <person name="Verardo R."/>
            <person name="Wei C.L."/>
            <person name="Yagi K."/>
            <person name="Yamanishi H."/>
            <person name="Zabarovsky E."/>
            <person name="Zhu S."/>
            <person name="Zimmer A."/>
            <person name="Hide W."/>
            <person name="Bult C."/>
            <person name="Grimmond S.M."/>
            <person name="Teasdale R.D."/>
            <person name="Liu E.T."/>
            <person name="Brusic V."/>
            <person name="Quackenbush J."/>
            <person name="Wahlestedt C."/>
            <person name="Mattick J.S."/>
            <person name="Hume D.A."/>
            <person name="Kai C."/>
            <person name="Sasaki D."/>
            <person name="Tomaru Y."/>
            <person name="Fukuda S."/>
            <person name="Kanamori-Katayama M."/>
            <person name="Suzuki M."/>
            <person name="Aoki J."/>
            <person name="Arakawa T."/>
            <person name="Iida J."/>
            <person name="Imamura K."/>
            <person name="Itoh M."/>
            <person name="Kato T."/>
            <person name="Kawaji H."/>
            <person name="Kawagashira N."/>
            <person name="Kawashima T."/>
            <person name="Kojima M."/>
            <person name="Kondo S."/>
            <person name="Konno H."/>
            <person name="Nakano K."/>
            <person name="Ninomiya N."/>
            <person name="Nishio T."/>
            <person name="Okada M."/>
            <person name="Plessy C."/>
            <person name="Shibata K."/>
            <person name="Shiraki T."/>
            <person name="Suzuki S."/>
            <person name="Tagami M."/>
            <person name="Waki K."/>
            <person name="Watahiki A."/>
            <person name="Okamura-Oho Y."/>
            <person name="Suzuki H."/>
            <person name="Kawai J."/>
            <person name="Hayashizaki Y."/>
        </authorList>
    </citation>
    <scope>NUCLEOTIDE SEQUENCE [LARGE SCALE MRNA]</scope>
    <source>
        <strain>C57BL/6J</strain>
        <tissue>Inner ear</tissue>
        <tissue>Placenta</tissue>
    </source>
</reference>
<reference key="2">
    <citation type="journal article" date="2004" name="Genome Res.">
        <title>The status, quality, and expansion of the NIH full-length cDNA project: the Mammalian Gene Collection (MGC).</title>
        <authorList>
            <consortium name="The MGC Project Team"/>
        </authorList>
    </citation>
    <scope>NUCLEOTIDE SEQUENCE [LARGE SCALE MRNA]</scope>
    <source>
        <tissue>Liver</tissue>
    </source>
</reference>
<reference key="3">
    <citation type="journal article" date="2010" name="Cell">
        <title>A tissue-specific atlas of mouse protein phosphorylation and expression.</title>
        <authorList>
            <person name="Huttlin E.L."/>
            <person name="Jedrychowski M.P."/>
            <person name="Elias J.E."/>
            <person name="Goswami T."/>
            <person name="Rad R."/>
            <person name="Beausoleil S.A."/>
            <person name="Villen J."/>
            <person name="Haas W."/>
            <person name="Sowa M.E."/>
            <person name="Gygi S.P."/>
        </authorList>
    </citation>
    <scope>IDENTIFICATION BY MASS SPECTROMETRY [LARGE SCALE ANALYSIS]</scope>
    <source>
        <tissue>Brain</tissue>
        <tissue>Brown adipose tissue</tissue>
        <tissue>Kidney</tissue>
        <tissue>Liver</tissue>
        <tissue>Lung</tissue>
        <tissue>Spleen</tissue>
        <tissue>Testis</tissue>
    </source>
</reference>
<keyword id="KW-0175">Coiled coil</keyword>
<keyword id="KW-1185">Reference proteome</keyword>
<proteinExistence type="evidence at protein level"/>
<dbReference type="EMBL" id="AK167445">
    <property type="protein sequence ID" value="BAE39531.1"/>
    <property type="molecule type" value="mRNA"/>
</dbReference>
<dbReference type="EMBL" id="AK158349">
    <property type="protein sequence ID" value="BAE34466.1"/>
    <property type="molecule type" value="mRNA"/>
</dbReference>
<dbReference type="EMBL" id="BC089614">
    <property type="protein sequence ID" value="AAH89614.1"/>
    <property type="molecule type" value="mRNA"/>
</dbReference>
<dbReference type="CCDS" id="CCDS18575.1"/>
<dbReference type="RefSeq" id="NP_001012400.1">
    <property type="nucleotide sequence ID" value="NM_001012400.3"/>
</dbReference>
<dbReference type="BioGRID" id="231002">
    <property type="interactions" value="2"/>
</dbReference>
<dbReference type="FunCoup" id="Q5EBG8">
    <property type="interactions" value="85"/>
</dbReference>
<dbReference type="STRING" id="10090.ENSMUSP00000115729"/>
<dbReference type="GlyGen" id="Q5EBG8">
    <property type="glycosylation" value="2 sites, 1 O-linked glycan (1 site)"/>
</dbReference>
<dbReference type="iPTMnet" id="Q5EBG8"/>
<dbReference type="PhosphoSitePlus" id="Q5EBG8"/>
<dbReference type="SwissPalm" id="Q5EBG8"/>
<dbReference type="jPOST" id="Q5EBG8"/>
<dbReference type="PaxDb" id="10090-ENSMUSP00000115729"/>
<dbReference type="PeptideAtlas" id="Q5EBG8"/>
<dbReference type="Pumba" id="Q5EBG8"/>
<dbReference type="Antibodypedia" id="32249">
    <property type="antibodies" value="186 antibodies from 19 providers"/>
</dbReference>
<dbReference type="DNASU" id="230696"/>
<dbReference type="Ensembl" id="ENSMUST00000141112.2">
    <property type="protein sequence ID" value="ENSMUSP00000115729.2"/>
    <property type="gene ID" value="ENSMUSG00000078584.10"/>
</dbReference>
<dbReference type="GeneID" id="230696"/>
<dbReference type="KEGG" id="mmu:230696"/>
<dbReference type="UCSC" id="uc008ulo.2">
    <property type="organism name" value="mouse"/>
</dbReference>
<dbReference type="AGR" id="MGI:2140466"/>
<dbReference type="MGI" id="MGI:2140466">
    <property type="gene designation" value="AU022252"/>
</dbReference>
<dbReference type="VEuPathDB" id="HostDB:ENSMUSG00000078584"/>
<dbReference type="eggNOG" id="ENOG502QWKE">
    <property type="taxonomic scope" value="Eukaryota"/>
</dbReference>
<dbReference type="GeneTree" id="ENSGT00390000003084"/>
<dbReference type="HOGENOM" id="CLU_102988_0_1_1"/>
<dbReference type="InParanoid" id="Q5EBG8"/>
<dbReference type="OMA" id="KEWGANC"/>
<dbReference type="OrthoDB" id="20821at9989"/>
<dbReference type="PhylomeDB" id="Q5EBG8"/>
<dbReference type="TreeFam" id="TF105992"/>
<dbReference type="BioGRID-ORCS" id="230696">
    <property type="hits" value="5 hits in 76 CRISPR screens"/>
</dbReference>
<dbReference type="PRO" id="PR:Q5EBG8"/>
<dbReference type="Proteomes" id="UP000000589">
    <property type="component" value="Chromosome 4"/>
</dbReference>
<dbReference type="RNAct" id="Q5EBG8">
    <property type="molecule type" value="protein"/>
</dbReference>
<dbReference type="Bgee" id="ENSMUSG00000078584">
    <property type="expression patterns" value="Expressed in left lobe of liver and 194 other cell types or tissues"/>
</dbReference>
<dbReference type="GO" id="GO:0042802">
    <property type="term" value="F:identical protein binding"/>
    <property type="evidence" value="ECO:0007669"/>
    <property type="project" value="Ensembl"/>
</dbReference>
<dbReference type="InterPro" id="IPR019534">
    <property type="entry name" value="DUF2452"/>
</dbReference>
<dbReference type="PANTHER" id="PTHR14553:SF1">
    <property type="entry name" value="SIMILAR TO CHROMOSOME 1 OPEN READING FRAME 50"/>
    <property type="match status" value="1"/>
</dbReference>
<dbReference type="PANTHER" id="PTHR14553">
    <property type="entry name" value="UNCHARACTERIZED PROTEIN C1ORF50"/>
    <property type="match status" value="1"/>
</dbReference>
<dbReference type="Pfam" id="PF10504">
    <property type="entry name" value="DUF2452"/>
    <property type="match status" value="1"/>
</dbReference>
<name>CA050_MOUSE</name>
<organism>
    <name type="scientific">Mus musculus</name>
    <name type="common">Mouse</name>
    <dbReference type="NCBI Taxonomy" id="10090"/>
    <lineage>
        <taxon>Eukaryota</taxon>
        <taxon>Metazoa</taxon>
        <taxon>Chordata</taxon>
        <taxon>Craniata</taxon>
        <taxon>Vertebrata</taxon>
        <taxon>Euteleostomi</taxon>
        <taxon>Mammalia</taxon>
        <taxon>Eutheria</taxon>
        <taxon>Euarchontoglires</taxon>
        <taxon>Glires</taxon>
        <taxon>Rodentia</taxon>
        <taxon>Myomorpha</taxon>
        <taxon>Muroidea</taxon>
        <taxon>Muridae</taxon>
        <taxon>Murinae</taxon>
        <taxon>Mus</taxon>
        <taxon>Mus</taxon>
    </lineage>
</organism>
<feature type="chain" id="PRO_0000251190" description="Uncharacterized protein C1orf50 homolog">
    <location>
        <begin position="1"/>
        <end position="199"/>
    </location>
</feature>
<feature type="coiled-coil region" evidence="1">
    <location>
        <begin position="71"/>
        <end position="104"/>
    </location>
</feature>